<comment type="function">
    <text evidence="1">Catalyzes the dehydration of inosose (2-keto-myo-inositol, 2KMI or 2,4,6/3,5-pentahydroxycyclohexanone) to 3D-(3,5/4)-trihydroxycyclohexane-1,2-dione (D-2,3-diketo-4-deoxy-epi-inositol).</text>
</comment>
<comment type="catalytic activity">
    <reaction evidence="1">
        <text>scyllo-inosose = 3D-3,5/4-trihydroxycyclohexane-1,2-dione + H2O</text>
        <dbReference type="Rhea" id="RHEA:14065"/>
        <dbReference type="ChEBI" id="CHEBI:15377"/>
        <dbReference type="ChEBI" id="CHEBI:17811"/>
        <dbReference type="ChEBI" id="CHEBI:28446"/>
        <dbReference type="EC" id="4.2.1.44"/>
    </reaction>
</comment>
<comment type="cofactor">
    <cofactor evidence="1">
        <name>glutathione</name>
        <dbReference type="ChEBI" id="CHEBI:57925"/>
    </cofactor>
</comment>
<comment type="cofactor">
    <cofactor evidence="1">
        <name>Co(2+)</name>
        <dbReference type="ChEBI" id="CHEBI:48828"/>
    </cofactor>
    <cofactor evidence="1">
        <name>Mn(2+)</name>
        <dbReference type="ChEBI" id="CHEBI:29035"/>
    </cofactor>
</comment>
<comment type="similarity">
    <text evidence="1">Belongs to the IolE/MocC family.</text>
</comment>
<feature type="chain" id="PRO_0000352381" description="Inosose dehydratase">
    <location>
        <begin position="1"/>
        <end position="298"/>
    </location>
</feature>
<accession>A1JSK6</accession>
<dbReference type="EC" id="4.2.1.44" evidence="1"/>
<dbReference type="EMBL" id="AM286415">
    <property type="protein sequence ID" value="CAL14043.1"/>
    <property type="molecule type" value="Genomic_DNA"/>
</dbReference>
<dbReference type="RefSeq" id="WP_011817366.1">
    <property type="nucleotide sequence ID" value="NC_008800.1"/>
</dbReference>
<dbReference type="RefSeq" id="YP_001008389.1">
    <property type="nucleotide sequence ID" value="NC_008800.1"/>
</dbReference>
<dbReference type="SMR" id="A1JSK6"/>
<dbReference type="KEGG" id="yen:YE4025"/>
<dbReference type="PATRIC" id="fig|393305.7.peg.4285"/>
<dbReference type="eggNOG" id="COG1082">
    <property type="taxonomic scope" value="Bacteria"/>
</dbReference>
<dbReference type="HOGENOM" id="CLU_059523_0_0_6"/>
<dbReference type="OrthoDB" id="9804047at2"/>
<dbReference type="Proteomes" id="UP000000642">
    <property type="component" value="Chromosome"/>
</dbReference>
<dbReference type="GO" id="GO:0030145">
    <property type="term" value="F:manganese ion binding"/>
    <property type="evidence" value="ECO:0007669"/>
    <property type="project" value="UniProtKB-UniRule"/>
</dbReference>
<dbReference type="GO" id="GO:0050114">
    <property type="term" value="F:myo-inosose-2 dehydratase activity"/>
    <property type="evidence" value="ECO:0007669"/>
    <property type="project" value="UniProtKB-UniRule"/>
</dbReference>
<dbReference type="GO" id="GO:0019310">
    <property type="term" value="P:inositol catabolic process"/>
    <property type="evidence" value="ECO:0007669"/>
    <property type="project" value="UniProtKB-UniRule"/>
</dbReference>
<dbReference type="Gene3D" id="3.20.20.150">
    <property type="entry name" value="Divalent-metal-dependent TIM barrel enzymes"/>
    <property type="match status" value="1"/>
</dbReference>
<dbReference type="HAMAP" id="MF_01672">
    <property type="entry name" value="IolE"/>
    <property type="match status" value="1"/>
</dbReference>
<dbReference type="InterPro" id="IPR023952">
    <property type="entry name" value="IolE"/>
</dbReference>
<dbReference type="InterPro" id="IPR030823">
    <property type="entry name" value="IolE/MocC"/>
</dbReference>
<dbReference type="InterPro" id="IPR050312">
    <property type="entry name" value="IolE/XylAMocC-like"/>
</dbReference>
<dbReference type="InterPro" id="IPR036237">
    <property type="entry name" value="Xyl_isomerase-like_sf"/>
</dbReference>
<dbReference type="InterPro" id="IPR013022">
    <property type="entry name" value="Xyl_isomerase-like_TIM-brl"/>
</dbReference>
<dbReference type="NCBIfam" id="TIGR04379">
    <property type="entry name" value="myo_inos_iolE"/>
    <property type="match status" value="1"/>
</dbReference>
<dbReference type="PANTHER" id="PTHR12110">
    <property type="entry name" value="HYDROXYPYRUVATE ISOMERASE"/>
    <property type="match status" value="1"/>
</dbReference>
<dbReference type="PANTHER" id="PTHR12110:SF41">
    <property type="entry name" value="INOSOSE DEHYDRATASE"/>
    <property type="match status" value="1"/>
</dbReference>
<dbReference type="Pfam" id="PF01261">
    <property type="entry name" value="AP_endonuc_2"/>
    <property type="match status" value="1"/>
</dbReference>
<dbReference type="SUPFAM" id="SSF51658">
    <property type="entry name" value="Xylose isomerase-like"/>
    <property type="match status" value="1"/>
</dbReference>
<gene>
    <name evidence="1" type="primary">iolE</name>
    <name type="ordered locus">YE4025</name>
</gene>
<keyword id="KW-0170">Cobalt</keyword>
<keyword id="KW-0456">Lyase</keyword>
<keyword id="KW-0464">Manganese</keyword>
<evidence type="ECO:0000255" key="1">
    <source>
        <dbReference type="HAMAP-Rule" id="MF_01672"/>
    </source>
</evidence>
<organism>
    <name type="scientific">Yersinia enterocolitica serotype O:8 / biotype 1B (strain NCTC 13174 / 8081)</name>
    <dbReference type="NCBI Taxonomy" id="393305"/>
    <lineage>
        <taxon>Bacteria</taxon>
        <taxon>Pseudomonadati</taxon>
        <taxon>Pseudomonadota</taxon>
        <taxon>Gammaproteobacteria</taxon>
        <taxon>Enterobacterales</taxon>
        <taxon>Yersiniaceae</taxon>
        <taxon>Yersinia</taxon>
    </lineage>
</organism>
<sequence length="298" mass="33627">MNKDRVKLAIAPIGWTNDDMPDLGKENTFQQCISEMALAGFIGSEVGSKYPRDPNVLKPMLELRGMQICNAWFSTFFADGQRARTIDEFTNHMNFLHAMGAKVIGCSEQSKSIQGTTKAIFEEKPYFTDTEWQRVAEGYNELAKIAATKGMQVCLHHHMGTGIQTTEEIDRYMSMVNDDVYLLFDTGHAYYSEGSQEAMLAILEKYLPRINHVHLKDVRDEVVAEVKAKKLSFLDGVKKGTFTVPGDGVIDFRPVFKLLDEKGYQGWMVVEAEQDPAIANPFEYAVKARRYIKETAGI</sequence>
<name>IOLE_YERE8</name>
<protein>
    <recommendedName>
        <fullName evidence="1">Inosose dehydratase</fullName>
        <ecNumber evidence="1">4.2.1.44</ecNumber>
    </recommendedName>
    <alternativeName>
        <fullName evidence="1">2-keto-myo-inositol dehydratase</fullName>
        <shortName evidence="1">2KMI dehydratase</shortName>
    </alternativeName>
</protein>
<proteinExistence type="inferred from homology"/>
<reference key="1">
    <citation type="journal article" date="2006" name="PLoS Genet.">
        <title>The complete genome sequence and comparative genome analysis of the high pathogenicity Yersinia enterocolitica strain 8081.</title>
        <authorList>
            <person name="Thomson N.R."/>
            <person name="Howard S."/>
            <person name="Wren B.W."/>
            <person name="Holden M.T.G."/>
            <person name="Crossman L."/>
            <person name="Challis G.L."/>
            <person name="Churcher C."/>
            <person name="Mungall K."/>
            <person name="Brooks K."/>
            <person name="Chillingworth T."/>
            <person name="Feltwell T."/>
            <person name="Abdellah Z."/>
            <person name="Hauser H."/>
            <person name="Jagels K."/>
            <person name="Maddison M."/>
            <person name="Moule S."/>
            <person name="Sanders M."/>
            <person name="Whitehead S."/>
            <person name="Quail M.A."/>
            <person name="Dougan G."/>
            <person name="Parkhill J."/>
            <person name="Prentice M.B."/>
        </authorList>
    </citation>
    <scope>NUCLEOTIDE SEQUENCE [LARGE SCALE GENOMIC DNA]</scope>
    <source>
        <strain>NCTC 13174 / 8081</strain>
    </source>
</reference>